<reference key="1">
    <citation type="journal article" date="2002" name="Biochim. Biophys. Acta">
        <title>Alpha-mannosidosis in the guinea pig: cloning of the lysosomal alpha-mannosidase cDNA and identification of a missense mutation causing alpha-mannosidosis.</title>
        <authorList>
            <person name="Berg T."/>
            <person name="Hopwood J.J."/>
        </authorList>
    </citation>
    <scope>NUCLEOTIDE SEQUENCE [MRNA]</scope>
    <scope>VARIANT AM TRP-227</scope>
    <scope>VARIANT ILE-55</scope>
</reference>
<sequence>MGASVLPLGLGAGDCQSSSGRRMSACLPRTALSFLLSLLLATPGARAAGYETCPMVQPGMLNVHLVAHTHDDVGWLKTVDQYYWGIHNDLQQAGVQYILDSVISALLAEPTRRFVYVEMAFFSRWWHQQTNETQEVVRRLVRQGRLEFANGGWVMNDEAATHYGAIVDQMTLGLRFLEDTFGSDGRPRVAWHIDPFGHSREQASLFAQMGFDGVFFGRIDYQDKLVRKKRREMELVWRASASLKAPAADLFTGVLPNNYGPPEGLCWDVLCADPPVVDDPRSPEYNAKKLVSYFLQLATAQGRYYRTNHTVMTMGSDFQYENANTWFKNLDKLIQLVNMQQANGSRVHVLYSTPACYLWELNKANLTWPVKEDDFFPYADGPHMFWTGYFSSRPALKRYERLSYNFLQVCNQLEAQVGPAANVGPYGHGDSSPLNQAMAVLQHHDAVSGTSKQHVADDYARQLAAGWGPCEVLLSNALAKLSGSKETFLFCRDLNISICPFSQTSERFQVLVYNPLGRKVDRMVRLPVRKGLFLIKDPGNNTVPSTVVELTSSGNPELLFPALVPALGFSVYSVTRVSDQNPQTRSQHSRPQKYSSPVLSIKNEYLRASFHPDTGLLSMIEVLDRKLTLPVNQAFFWYNASVGDKRSSQASGAYIFRPSQQWPFPVSHLARTRLVKTALVQEVHQNFTAWCSQVVRLYSGQRHLELEWTVGPIPVGDKWGKEIISRFDTPLETGGVFFTDSNGREVLERRRDYRPSWKLNQTEPVAGNYYPVNSRIYITDGKMQLTVLTDRSQGGSSMSDGSLELMVHRRLLKDDGRGVGEALQEPGSGGWVRGRHLLLLDTAREAAAEHRLLAEKELLAPQLVLAPGQGPSYHHDHHEAVPRKQFSGLRRQLPPSVRLLTLARWGPDTLLLRLEHQFALGEDSSRNLSLPVTLDLQDLFSTFTITRLQETTLAANQLRASASRLKWTTEIDPISRPAVPRLDPSSITLQPMEIRTFVASVQWEENS</sequence>
<keyword id="KW-0225">Disease variant</keyword>
<keyword id="KW-1015">Disulfide bond</keyword>
<keyword id="KW-0325">Glycoprotein</keyword>
<keyword id="KW-0326">Glycosidase</keyword>
<keyword id="KW-0378">Hydrolase</keyword>
<keyword id="KW-0458">Lysosome</keyword>
<keyword id="KW-0479">Metal-binding</keyword>
<keyword id="KW-1185">Reference proteome</keyword>
<keyword id="KW-0732">Signal</keyword>
<keyword id="KW-0862">Zinc</keyword>
<comment type="function">
    <text evidence="1">Necessary for the catabolism of N-linked carbohydrates released during glycoprotein turnover.</text>
</comment>
<comment type="catalytic activity">
    <reaction>
        <text>Hydrolysis of terminal, non-reducing alpha-D-mannose residues in alpha-D-mannosides.</text>
        <dbReference type="EC" id="3.2.1.24"/>
    </reaction>
</comment>
<comment type="cofactor">
    <cofactor evidence="1">
        <name>Zn(2+)</name>
        <dbReference type="ChEBI" id="CHEBI:29105"/>
    </cofactor>
    <text evidence="1">Binds 1 zinc ion per subunit.</text>
</comment>
<comment type="subcellular location">
    <subcellularLocation>
        <location>Lysosome</location>
    </subcellularLocation>
</comment>
<comment type="disease">
    <text evidence="3">Defects in MAN2B1 are the cause of lysosomal alpha-mannosidosis (AM). AM is a lysosomal storage disease characterized by accumulation of unbranched oligosaccharide chains.</text>
</comment>
<comment type="similarity">
    <text evidence="4">Belongs to the glycosyl hydrolase 38 family.</text>
</comment>
<protein>
    <recommendedName>
        <fullName>Lysosomal alpha-mannosidase</fullName>
        <shortName>Laman</shortName>
        <ecNumber>3.2.1.24</ecNumber>
    </recommendedName>
    <alternativeName>
        <fullName>Lysosomal acid alpha-mannosidase</fullName>
    </alternativeName>
    <alternativeName>
        <fullName>Mannosidase alpha class 2B member 1</fullName>
    </alternativeName>
    <alternativeName>
        <fullName>Mannosidase alpha-B</fullName>
    </alternativeName>
</protein>
<name>MA2B1_CAVPO</name>
<proteinExistence type="evidence at protein level"/>
<evidence type="ECO:0000250" key="1"/>
<evidence type="ECO:0000255" key="2"/>
<evidence type="ECO:0000269" key="3">
    <source>
    </source>
</evidence>
<evidence type="ECO:0000305" key="4"/>
<organism>
    <name type="scientific">Cavia porcellus</name>
    <name type="common">Guinea pig</name>
    <dbReference type="NCBI Taxonomy" id="10141"/>
    <lineage>
        <taxon>Eukaryota</taxon>
        <taxon>Metazoa</taxon>
        <taxon>Chordata</taxon>
        <taxon>Craniata</taxon>
        <taxon>Vertebrata</taxon>
        <taxon>Euteleostomi</taxon>
        <taxon>Mammalia</taxon>
        <taxon>Eutheria</taxon>
        <taxon>Euarchontoglires</taxon>
        <taxon>Glires</taxon>
        <taxon>Rodentia</taxon>
        <taxon>Hystricomorpha</taxon>
        <taxon>Caviidae</taxon>
        <taxon>Cavia</taxon>
    </lineage>
</organism>
<gene>
    <name type="primary">MAN2B1</name>
    <name type="synonym">MANB</name>
</gene>
<dbReference type="EC" id="3.2.1.24"/>
<dbReference type="EMBL" id="AY036153">
    <property type="protein sequence ID" value="AAL58982.1"/>
    <property type="molecule type" value="mRNA"/>
</dbReference>
<dbReference type="EMBL" id="AY036154">
    <property type="protein sequence ID" value="AAL58983.1"/>
    <property type="molecule type" value="mRNA"/>
</dbReference>
<dbReference type="EMBL" id="AY036155">
    <property type="protein sequence ID" value="AAL58984.1"/>
    <property type="molecule type" value="mRNA"/>
</dbReference>
<dbReference type="RefSeq" id="NP_001244175.1">
    <property type="nucleotide sequence ID" value="NM_001257246.1"/>
</dbReference>
<dbReference type="SMR" id="Q8VHC8"/>
<dbReference type="FunCoup" id="Q8VHC8">
    <property type="interactions" value="786"/>
</dbReference>
<dbReference type="STRING" id="10141.ENSCPOP00000017509"/>
<dbReference type="CAZy" id="GH38">
    <property type="family name" value="Glycoside Hydrolase Family 38"/>
</dbReference>
<dbReference type="GlyCosmos" id="Q8VHC8">
    <property type="glycosylation" value="10 sites, No reported glycans"/>
</dbReference>
<dbReference type="GeneID" id="100718205"/>
<dbReference type="KEGG" id="cpoc:100718205"/>
<dbReference type="CTD" id="4125"/>
<dbReference type="eggNOG" id="KOG1959">
    <property type="taxonomic scope" value="Eukaryota"/>
</dbReference>
<dbReference type="HOGENOM" id="CLU_004690_2_0_1"/>
<dbReference type="InParanoid" id="Q8VHC8"/>
<dbReference type="OrthoDB" id="2016903at2759"/>
<dbReference type="Proteomes" id="UP000005447">
    <property type="component" value="Unassembled WGS sequence"/>
</dbReference>
<dbReference type="GO" id="GO:0005764">
    <property type="term" value="C:lysosome"/>
    <property type="evidence" value="ECO:0007669"/>
    <property type="project" value="UniProtKB-SubCell"/>
</dbReference>
<dbReference type="GO" id="GO:0004559">
    <property type="term" value="F:alpha-mannosidase activity"/>
    <property type="evidence" value="ECO:0007669"/>
    <property type="project" value="UniProtKB-EC"/>
</dbReference>
<dbReference type="GO" id="GO:0030246">
    <property type="term" value="F:carbohydrate binding"/>
    <property type="evidence" value="ECO:0007669"/>
    <property type="project" value="InterPro"/>
</dbReference>
<dbReference type="GO" id="GO:0046872">
    <property type="term" value="F:metal ion binding"/>
    <property type="evidence" value="ECO:0007669"/>
    <property type="project" value="UniProtKB-KW"/>
</dbReference>
<dbReference type="GO" id="GO:0006013">
    <property type="term" value="P:mannose metabolic process"/>
    <property type="evidence" value="ECO:0007669"/>
    <property type="project" value="InterPro"/>
</dbReference>
<dbReference type="CDD" id="cd10810">
    <property type="entry name" value="GH38N_AMII_LAM_like"/>
    <property type="match status" value="1"/>
</dbReference>
<dbReference type="FunFam" id="1.20.1270.50:FF:000002">
    <property type="entry name" value="Alpha-mannosidase"/>
    <property type="match status" value="1"/>
</dbReference>
<dbReference type="FunFam" id="1.20.1270.50:FF:000003">
    <property type="entry name" value="Alpha-mannosidase"/>
    <property type="match status" value="1"/>
</dbReference>
<dbReference type="FunFam" id="2.60.40.1360:FF:000002">
    <property type="entry name" value="Alpha-mannosidase"/>
    <property type="match status" value="1"/>
</dbReference>
<dbReference type="FunFam" id="2.70.98.30:FF:000003">
    <property type="entry name" value="Alpha-mannosidase"/>
    <property type="match status" value="1"/>
</dbReference>
<dbReference type="FunFam" id="3.20.110.10:FF:000001">
    <property type="entry name" value="Alpha-mannosidase"/>
    <property type="match status" value="1"/>
</dbReference>
<dbReference type="Gene3D" id="2.60.40.1360">
    <property type="match status" value="1"/>
</dbReference>
<dbReference type="Gene3D" id="3.20.110.10">
    <property type="entry name" value="Glycoside hydrolase 38, N terminal domain"/>
    <property type="match status" value="1"/>
</dbReference>
<dbReference type="Gene3D" id="1.20.1270.50">
    <property type="entry name" value="Glycoside hydrolase family 38, central domain"/>
    <property type="match status" value="2"/>
</dbReference>
<dbReference type="Gene3D" id="2.60.40.1180">
    <property type="entry name" value="Golgi alpha-mannosidase II"/>
    <property type="match status" value="1"/>
</dbReference>
<dbReference type="Gene3D" id="2.70.98.30">
    <property type="entry name" value="Golgi alpha-mannosidase II, domain 4"/>
    <property type="match status" value="1"/>
</dbReference>
<dbReference type="InterPro" id="IPR011013">
    <property type="entry name" value="Gal_mutarotase_sf_dom"/>
</dbReference>
<dbReference type="InterPro" id="IPR041147">
    <property type="entry name" value="GH38_C"/>
</dbReference>
<dbReference type="InterPro" id="IPR011330">
    <property type="entry name" value="Glyco_hydro/deAcase_b/a-brl"/>
</dbReference>
<dbReference type="InterPro" id="IPR011682">
    <property type="entry name" value="Glyco_hydro_38_C"/>
</dbReference>
<dbReference type="InterPro" id="IPR015341">
    <property type="entry name" value="Glyco_hydro_38_cen"/>
</dbReference>
<dbReference type="InterPro" id="IPR037094">
    <property type="entry name" value="Glyco_hydro_38_cen_sf"/>
</dbReference>
<dbReference type="InterPro" id="IPR000602">
    <property type="entry name" value="Glyco_hydro_38_N"/>
</dbReference>
<dbReference type="InterPro" id="IPR027291">
    <property type="entry name" value="Glyco_hydro_38_N_sf"/>
</dbReference>
<dbReference type="InterPro" id="IPR028995">
    <property type="entry name" value="Glyco_hydro_57/38_cen_sf"/>
</dbReference>
<dbReference type="InterPro" id="IPR013780">
    <property type="entry name" value="Glyco_hydro_b"/>
</dbReference>
<dbReference type="InterPro" id="IPR050843">
    <property type="entry name" value="Glycosyl_Hydrlase_38"/>
</dbReference>
<dbReference type="InterPro" id="IPR048534">
    <property type="entry name" value="Man2a1-like_dom"/>
</dbReference>
<dbReference type="PANTHER" id="PTHR11607">
    <property type="entry name" value="ALPHA-MANNOSIDASE"/>
    <property type="match status" value="1"/>
</dbReference>
<dbReference type="PANTHER" id="PTHR11607:SF3">
    <property type="entry name" value="LYSOSOMAL ALPHA-MANNOSIDASE"/>
    <property type="match status" value="1"/>
</dbReference>
<dbReference type="Pfam" id="PF09261">
    <property type="entry name" value="Alpha-mann_mid"/>
    <property type="match status" value="1"/>
</dbReference>
<dbReference type="Pfam" id="PF17677">
    <property type="entry name" value="Glyco_hydro38C2"/>
    <property type="match status" value="1"/>
</dbReference>
<dbReference type="Pfam" id="PF07748">
    <property type="entry name" value="Glyco_hydro_38C"/>
    <property type="match status" value="1"/>
</dbReference>
<dbReference type="Pfam" id="PF01074">
    <property type="entry name" value="Glyco_hydro_38N"/>
    <property type="match status" value="1"/>
</dbReference>
<dbReference type="Pfam" id="PF21260">
    <property type="entry name" value="Laman-like_dom"/>
    <property type="match status" value="1"/>
</dbReference>
<dbReference type="SMART" id="SM00872">
    <property type="entry name" value="Alpha-mann_mid"/>
    <property type="match status" value="1"/>
</dbReference>
<dbReference type="SUPFAM" id="SSF88688">
    <property type="entry name" value="Families 57/38 glycoside transferase middle domain"/>
    <property type="match status" value="1"/>
</dbReference>
<dbReference type="SUPFAM" id="SSF74650">
    <property type="entry name" value="Galactose mutarotase-like"/>
    <property type="match status" value="1"/>
</dbReference>
<dbReference type="SUPFAM" id="SSF88713">
    <property type="entry name" value="Glycoside hydrolase/deacetylase"/>
    <property type="match status" value="1"/>
</dbReference>
<feature type="signal peptide" evidence="2">
    <location>
        <begin position="1"/>
        <end position="47"/>
    </location>
</feature>
<feature type="chain" id="PRO_0000012067" description="Lysosomal alpha-mannosidase">
    <location>
        <begin position="48"/>
        <end position="1007"/>
    </location>
</feature>
<feature type="active site" description="Nucleophile" evidence="1">
    <location>
        <position position="194"/>
    </location>
</feature>
<feature type="binding site" evidence="1">
    <location>
        <position position="70"/>
    </location>
    <ligand>
        <name>Zn(2+)</name>
        <dbReference type="ChEBI" id="CHEBI:29105"/>
    </ligand>
</feature>
<feature type="binding site" evidence="1">
    <location>
        <position position="72"/>
    </location>
    <ligand>
        <name>Zn(2+)</name>
        <dbReference type="ChEBI" id="CHEBI:29105"/>
    </ligand>
</feature>
<feature type="binding site" evidence="1">
    <location>
        <position position="194"/>
    </location>
    <ligand>
        <name>Zn(2+)</name>
        <dbReference type="ChEBI" id="CHEBI:29105"/>
    </ligand>
</feature>
<feature type="binding site" evidence="1">
    <location>
        <position position="444"/>
    </location>
    <ligand>
        <name>Zn(2+)</name>
        <dbReference type="ChEBI" id="CHEBI:29105"/>
    </ligand>
</feature>
<feature type="glycosylation site" description="N-linked (GlcNAc...) asparagine" evidence="2">
    <location>
        <position position="131"/>
    </location>
</feature>
<feature type="glycosylation site" description="N-linked (GlcNAc...) asparagine" evidence="2">
    <location>
        <position position="308"/>
    </location>
</feature>
<feature type="glycosylation site" description="N-linked (GlcNAc...) asparagine" evidence="2">
    <location>
        <position position="343"/>
    </location>
</feature>
<feature type="glycosylation site" description="N-linked (GlcNAc...) asparagine" evidence="2">
    <location>
        <position position="365"/>
    </location>
</feature>
<feature type="glycosylation site" description="N-linked (GlcNAc...) asparagine" evidence="2">
    <location>
        <position position="495"/>
    </location>
</feature>
<feature type="glycosylation site" description="N-linked (GlcNAc...) asparagine" evidence="2">
    <location>
        <position position="540"/>
    </location>
</feature>
<feature type="glycosylation site" description="N-linked (GlcNAc...) asparagine" evidence="2">
    <location>
        <position position="639"/>
    </location>
</feature>
<feature type="glycosylation site" description="N-linked (GlcNAc...) asparagine" evidence="2">
    <location>
        <position position="686"/>
    </location>
</feature>
<feature type="glycosylation site" description="N-linked (GlcNAc...) asparagine" evidence="2">
    <location>
        <position position="760"/>
    </location>
</feature>
<feature type="glycosylation site" description="N-linked (GlcNAc...) asparagine" evidence="2">
    <location>
        <position position="927"/>
    </location>
</feature>
<feature type="disulfide bond" evidence="1">
    <location>
        <begin position="53"/>
        <end position="356"/>
    </location>
</feature>
<feature type="disulfide bond" evidence="1">
    <location>
        <begin position="266"/>
        <end position="271"/>
    </location>
</feature>
<feature type="disulfide bond" evidence="1">
    <location>
        <begin position="410"/>
        <end position="470"/>
    </location>
</feature>
<feature type="disulfide bond" evidence="1">
    <location>
        <begin position="491"/>
        <end position="499"/>
    </location>
</feature>
<feature type="sequence variant" evidence="3">
    <original>M</original>
    <variation>I</variation>
    <location>
        <position position="55"/>
    </location>
</feature>
<feature type="sequence variant" description="In AM." evidence="3">
    <original>R</original>
    <variation>W</variation>
    <location>
        <position position="227"/>
    </location>
</feature>
<accession>Q8VHC8</accession>
<accession>Q8VHC6</accession>
<accession>Q8VHC7</accession>